<dbReference type="EMBL" id="CR628336">
    <property type="protein sequence ID" value="CAH11556.1"/>
    <property type="molecule type" value="Genomic_DNA"/>
</dbReference>
<dbReference type="SMR" id="Q5X845"/>
<dbReference type="KEGG" id="lpp:lpp0408"/>
<dbReference type="LegioList" id="lpp0408"/>
<dbReference type="HOGENOM" id="CLU_098428_0_0_6"/>
<dbReference type="GO" id="GO:1990904">
    <property type="term" value="C:ribonucleoprotein complex"/>
    <property type="evidence" value="ECO:0007669"/>
    <property type="project" value="UniProtKB-KW"/>
</dbReference>
<dbReference type="GO" id="GO:0005840">
    <property type="term" value="C:ribosome"/>
    <property type="evidence" value="ECO:0007669"/>
    <property type="project" value="UniProtKB-KW"/>
</dbReference>
<dbReference type="GO" id="GO:0019843">
    <property type="term" value="F:rRNA binding"/>
    <property type="evidence" value="ECO:0007669"/>
    <property type="project" value="UniProtKB-UniRule"/>
</dbReference>
<dbReference type="GO" id="GO:0003735">
    <property type="term" value="F:structural constituent of ribosome"/>
    <property type="evidence" value="ECO:0007669"/>
    <property type="project" value="InterPro"/>
</dbReference>
<dbReference type="GO" id="GO:0006412">
    <property type="term" value="P:translation"/>
    <property type="evidence" value="ECO:0007669"/>
    <property type="project" value="UniProtKB-UniRule"/>
</dbReference>
<dbReference type="FunFam" id="3.30.1370.30:FF:000002">
    <property type="entry name" value="30S ribosomal protein S8"/>
    <property type="match status" value="1"/>
</dbReference>
<dbReference type="FunFam" id="3.30.1490.10:FF:000001">
    <property type="entry name" value="30S ribosomal protein S8"/>
    <property type="match status" value="1"/>
</dbReference>
<dbReference type="Gene3D" id="3.30.1370.30">
    <property type="match status" value="1"/>
</dbReference>
<dbReference type="Gene3D" id="3.30.1490.10">
    <property type="match status" value="1"/>
</dbReference>
<dbReference type="HAMAP" id="MF_01302_B">
    <property type="entry name" value="Ribosomal_uS8_B"/>
    <property type="match status" value="1"/>
</dbReference>
<dbReference type="InterPro" id="IPR000630">
    <property type="entry name" value="Ribosomal_uS8"/>
</dbReference>
<dbReference type="InterPro" id="IPR047863">
    <property type="entry name" value="Ribosomal_uS8_CS"/>
</dbReference>
<dbReference type="InterPro" id="IPR035987">
    <property type="entry name" value="Ribosomal_uS8_sf"/>
</dbReference>
<dbReference type="NCBIfam" id="NF001109">
    <property type="entry name" value="PRK00136.1"/>
    <property type="match status" value="1"/>
</dbReference>
<dbReference type="PANTHER" id="PTHR11758">
    <property type="entry name" value="40S RIBOSOMAL PROTEIN S15A"/>
    <property type="match status" value="1"/>
</dbReference>
<dbReference type="Pfam" id="PF00410">
    <property type="entry name" value="Ribosomal_S8"/>
    <property type="match status" value="1"/>
</dbReference>
<dbReference type="SUPFAM" id="SSF56047">
    <property type="entry name" value="Ribosomal protein S8"/>
    <property type="match status" value="1"/>
</dbReference>
<dbReference type="PROSITE" id="PS00053">
    <property type="entry name" value="RIBOSOMAL_S8"/>
    <property type="match status" value="1"/>
</dbReference>
<proteinExistence type="inferred from homology"/>
<name>RS8_LEGPA</name>
<sequence length="131" mass="14669">MSMHDPIADMLTRIRNGQQAKHQQVTLVSSKLKEEIARVLKEEGYIQDFFTETLPNGLKSITLKLKYYHGRPVIEFIKRISRPGLRVYKSYKDLHSIPGFGVAILSTSKGIMTHVSAKVKGVGGEVICEVA</sequence>
<accession>Q5X845</accession>
<comment type="function">
    <text evidence="1">One of the primary rRNA binding proteins, it binds directly to 16S rRNA central domain where it helps coordinate assembly of the platform of the 30S subunit.</text>
</comment>
<comment type="subunit">
    <text evidence="1">Part of the 30S ribosomal subunit. Contacts proteins S5 and S12.</text>
</comment>
<comment type="similarity">
    <text evidence="1">Belongs to the universal ribosomal protein uS8 family.</text>
</comment>
<organism>
    <name type="scientific">Legionella pneumophila (strain Paris)</name>
    <dbReference type="NCBI Taxonomy" id="297246"/>
    <lineage>
        <taxon>Bacteria</taxon>
        <taxon>Pseudomonadati</taxon>
        <taxon>Pseudomonadota</taxon>
        <taxon>Gammaproteobacteria</taxon>
        <taxon>Legionellales</taxon>
        <taxon>Legionellaceae</taxon>
        <taxon>Legionella</taxon>
    </lineage>
</organism>
<evidence type="ECO:0000255" key="1">
    <source>
        <dbReference type="HAMAP-Rule" id="MF_01302"/>
    </source>
</evidence>
<evidence type="ECO:0000305" key="2"/>
<feature type="chain" id="PRO_0000290864" description="Small ribosomal subunit protein uS8">
    <location>
        <begin position="1"/>
        <end position="131"/>
    </location>
</feature>
<keyword id="KW-0687">Ribonucleoprotein</keyword>
<keyword id="KW-0689">Ribosomal protein</keyword>
<keyword id="KW-0694">RNA-binding</keyword>
<keyword id="KW-0699">rRNA-binding</keyword>
<protein>
    <recommendedName>
        <fullName evidence="1">Small ribosomal subunit protein uS8</fullName>
    </recommendedName>
    <alternativeName>
        <fullName evidence="2">30S ribosomal protein S8</fullName>
    </alternativeName>
</protein>
<reference key="1">
    <citation type="journal article" date="2004" name="Nat. Genet.">
        <title>Evidence in the Legionella pneumophila genome for exploitation of host cell functions and high genome plasticity.</title>
        <authorList>
            <person name="Cazalet C."/>
            <person name="Rusniok C."/>
            <person name="Brueggemann H."/>
            <person name="Zidane N."/>
            <person name="Magnier A."/>
            <person name="Ma L."/>
            <person name="Tichit M."/>
            <person name="Jarraud S."/>
            <person name="Bouchier C."/>
            <person name="Vandenesch F."/>
            <person name="Kunst F."/>
            <person name="Etienne J."/>
            <person name="Glaser P."/>
            <person name="Buchrieser C."/>
        </authorList>
    </citation>
    <scope>NUCLEOTIDE SEQUENCE [LARGE SCALE GENOMIC DNA]</scope>
    <source>
        <strain>Paris</strain>
    </source>
</reference>
<gene>
    <name evidence="1" type="primary">rpsH</name>
    <name type="ordered locus">lpp0408</name>
</gene>